<keyword id="KW-0004">4Fe-4S</keyword>
<keyword id="KW-0408">Iron</keyword>
<keyword id="KW-0411">Iron-sulfur</keyword>
<keyword id="KW-0479">Metal-binding</keyword>
<keyword id="KW-0489">Methyltransferase</keyword>
<keyword id="KW-0949">S-adenosyl-L-methionine</keyword>
<keyword id="KW-0808">Transferase</keyword>
<name>Y1299_STRP3</name>
<proteinExistence type="inferred from homology"/>
<reference key="1">
    <citation type="journal article" date="2002" name="Proc. Natl. Acad. Sci. U.S.A.">
        <title>Genome sequence of a serotype M3 strain of group A Streptococcus: phage-encoded toxins, the high-virulence phenotype, and clone emergence.</title>
        <authorList>
            <person name="Beres S.B."/>
            <person name="Sylva G.L."/>
            <person name="Barbian K.D."/>
            <person name="Lei B."/>
            <person name="Hoff J.S."/>
            <person name="Mammarella N.D."/>
            <person name="Liu M.-Y."/>
            <person name="Smoot J.C."/>
            <person name="Porcella S.F."/>
            <person name="Parkins L.D."/>
            <person name="Campbell D.S."/>
            <person name="Smith T.M."/>
            <person name="McCormick J.K."/>
            <person name="Leung D.Y.M."/>
            <person name="Schlievert P.M."/>
            <person name="Musser J.M."/>
        </authorList>
    </citation>
    <scope>NUCLEOTIDE SEQUENCE [LARGE SCALE GENOMIC DNA]</scope>
    <source>
        <strain>ATCC BAA-595 / MGAS315</strain>
    </source>
</reference>
<sequence>MVVKVKQKIPLKIKRMGINGEGIGFYQKTLVFVPGALKGENIFCQITAVKRNFAEAKLLTVNKASKNRVKPACSVYETCGGCQIMHLAYPKQLDFKDDVIRQALKKFKPTGYEQFEIRPTLGMKKPDHYRAKLQFQLRSFGGTVKAGLFSQGSHRLVPIDNCLVQDQLTQDIINKITQLVDKYKLPIYNERKIAGIRTIMVRKAQASDQVQIIVVSSKEVRLANFIGELTKAFPQVKTVALNSNRSKSSEIYGDETEILWGQEAIHEEVLDYGFALSPRAFYQLNPQQTEVLYGEVVKALDVGSKDHIIDAYCGVGSIGFAFAGKVKSVRGMDIIPEAIEDAQKNAKAMGFDNAYYEAGKAEDIIPKWYKQGYRADAIIVDPPRTGLDDKLLKTILHYQPKQMVYVSCNTSTLARDLVQLTKVYDVHYIQSVDMFPHTARTEAVVKLQKRV</sequence>
<dbReference type="EC" id="2.1.1.-"/>
<dbReference type="EMBL" id="AE014074">
    <property type="protein sequence ID" value="AAM79906.1"/>
    <property type="molecule type" value="Genomic_DNA"/>
</dbReference>
<dbReference type="SMR" id="P0DG16"/>
<dbReference type="KEGG" id="spg:SpyM3_1299"/>
<dbReference type="HOGENOM" id="CLU_014689_7_1_9"/>
<dbReference type="Proteomes" id="UP000000564">
    <property type="component" value="Chromosome"/>
</dbReference>
<dbReference type="GO" id="GO:0051539">
    <property type="term" value="F:4 iron, 4 sulfur cluster binding"/>
    <property type="evidence" value="ECO:0007669"/>
    <property type="project" value="UniProtKB-KW"/>
</dbReference>
<dbReference type="GO" id="GO:0046872">
    <property type="term" value="F:metal ion binding"/>
    <property type="evidence" value="ECO:0007669"/>
    <property type="project" value="UniProtKB-KW"/>
</dbReference>
<dbReference type="GO" id="GO:0070041">
    <property type="term" value="F:rRNA (uridine-C5-)-methyltransferase activity"/>
    <property type="evidence" value="ECO:0007669"/>
    <property type="project" value="TreeGrafter"/>
</dbReference>
<dbReference type="GO" id="GO:0070475">
    <property type="term" value="P:rRNA base methylation"/>
    <property type="evidence" value="ECO:0007669"/>
    <property type="project" value="TreeGrafter"/>
</dbReference>
<dbReference type="CDD" id="cd02440">
    <property type="entry name" value="AdoMet_MTases"/>
    <property type="match status" value="1"/>
</dbReference>
<dbReference type="FunFam" id="3.40.50.150:FF:000009">
    <property type="entry name" value="23S rRNA (Uracil(1939)-C(5))-methyltransferase RlmD"/>
    <property type="match status" value="1"/>
</dbReference>
<dbReference type="FunFam" id="2.40.50.140:FF:000097">
    <property type="entry name" value="23S rRNA (uracil(1939)-C(5))-methyltransferase RlmD"/>
    <property type="match status" value="1"/>
</dbReference>
<dbReference type="FunFam" id="2.40.50.1070:FF:000003">
    <property type="entry name" value="23S rRNA (Uracil-5-)-methyltransferase RumA"/>
    <property type="match status" value="1"/>
</dbReference>
<dbReference type="Gene3D" id="2.40.50.1070">
    <property type="match status" value="1"/>
</dbReference>
<dbReference type="Gene3D" id="2.40.50.140">
    <property type="entry name" value="Nucleic acid-binding proteins"/>
    <property type="match status" value="1"/>
</dbReference>
<dbReference type="Gene3D" id="3.40.50.150">
    <property type="entry name" value="Vaccinia Virus protein VP39"/>
    <property type="match status" value="1"/>
</dbReference>
<dbReference type="InterPro" id="IPR030390">
    <property type="entry name" value="MeTrfase_TrmA_AS"/>
</dbReference>
<dbReference type="InterPro" id="IPR030391">
    <property type="entry name" value="MeTrfase_TrmA_CS"/>
</dbReference>
<dbReference type="InterPro" id="IPR012340">
    <property type="entry name" value="NA-bd_OB-fold"/>
</dbReference>
<dbReference type="InterPro" id="IPR029063">
    <property type="entry name" value="SAM-dependent_MTases_sf"/>
</dbReference>
<dbReference type="InterPro" id="IPR002792">
    <property type="entry name" value="TRAM_dom"/>
</dbReference>
<dbReference type="InterPro" id="IPR010280">
    <property type="entry name" value="U5_MeTrfase_fam"/>
</dbReference>
<dbReference type="NCBIfam" id="TIGR00479">
    <property type="entry name" value="rumA"/>
    <property type="match status" value="1"/>
</dbReference>
<dbReference type="PANTHER" id="PTHR11061:SF45">
    <property type="match status" value="1"/>
</dbReference>
<dbReference type="PANTHER" id="PTHR11061">
    <property type="entry name" value="RNA M5U METHYLTRANSFERASE"/>
    <property type="match status" value="1"/>
</dbReference>
<dbReference type="Pfam" id="PF01938">
    <property type="entry name" value="TRAM"/>
    <property type="match status" value="1"/>
</dbReference>
<dbReference type="Pfam" id="PF05958">
    <property type="entry name" value="tRNA_U5-meth_tr"/>
    <property type="match status" value="1"/>
</dbReference>
<dbReference type="SUPFAM" id="SSF50249">
    <property type="entry name" value="Nucleic acid-binding proteins"/>
    <property type="match status" value="1"/>
</dbReference>
<dbReference type="SUPFAM" id="SSF53335">
    <property type="entry name" value="S-adenosyl-L-methionine-dependent methyltransferases"/>
    <property type="match status" value="1"/>
</dbReference>
<dbReference type="PROSITE" id="PS51687">
    <property type="entry name" value="SAM_MT_RNA_M5U"/>
    <property type="match status" value="1"/>
</dbReference>
<dbReference type="PROSITE" id="PS50926">
    <property type="entry name" value="TRAM"/>
    <property type="match status" value="1"/>
</dbReference>
<dbReference type="PROSITE" id="PS01230">
    <property type="entry name" value="TRMA_1"/>
    <property type="match status" value="1"/>
</dbReference>
<dbReference type="PROSITE" id="PS01231">
    <property type="entry name" value="TRMA_2"/>
    <property type="match status" value="1"/>
</dbReference>
<comment type="similarity">
    <text evidence="3">Belongs to the class I-like SAM-binding methyltransferase superfamily. RNA M5U methyltransferase family.</text>
</comment>
<protein>
    <recommendedName>
        <fullName>Uncharacterized RNA methyltransferase SpyM3_1299</fullName>
        <ecNumber>2.1.1.-</ecNumber>
    </recommendedName>
</protein>
<feature type="chain" id="PRO_0000162038" description="Uncharacterized RNA methyltransferase SpyM3_1299">
    <location>
        <begin position="1"/>
        <end position="451"/>
    </location>
</feature>
<feature type="domain" description="TRAM" evidence="2">
    <location>
        <begin position="2"/>
        <end position="60"/>
    </location>
</feature>
<feature type="active site" description="Nucleophile" evidence="3">
    <location>
        <position position="408"/>
    </location>
</feature>
<feature type="binding site" evidence="1">
    <location>
        <position position="73"/>
    </location>
    <ligand>
        <name>[4Fe-4S] cluster</name>
        <dbReference type="ChEBI" id="CHEBI:49883"/>
    </ligand>
</feature>
<feature type="binding site" evidence="1">
    <location>
        <position position="79"/>
    </location>
    <ligand>
        <name>[4Fe-4S] cluster</name>
        <dbReference type="ChEBI" id="CHEBI:49883"/>
    </ligand>
</feature>
<feature type="binding site" evidence="1">
    <location>
        <position position="82"/>
    </location>
    <ligand>
        <name>[4Fe-4S] cluster</name>
        <dbReference type="ChEBI" id="CHEBI:49883"/>
    </ligand>
</feature>
<feature type="binding site" evidence="1">
    <location>
        <position position="162"/>
    </location>
    <ligand>
        <name>[4Fe-4S] cluster</name>
        <dbReference type="ChEBI" id="CHEBI:49883"/>
    </ligand>
</feature>
<feature type="binding site" evidence="3">
    <location>
        <position position="283"/>
    </location>
    <ligand>
        <name>S-adenosyl-L-methionine</name>
        <dbReference type="ChEBI" id="CHEBI:59789"/>
    </ligand>
</feature>
<feature type="binding site" evidence="3">
    <location>
        <position position="312"/>
    </location>
    <ligand>
        <name>S-adenosyl-L-methionine</name>
        <dbReference type="ChEBI" id="CHEBI:59789"/>
    </ligand>
</feature>
<feature type="binding site" evidence="3">
    <location>
        <position position="333"/>
    </location>
    <ligand>
        <name>S-adenosyl-L-methionine</name>
        <dbReference type="ChEBI" id="CHEBI:59789"/>
    </ligand>
</feature>
<feature type="binding site" evidence="3">
    <location>
        <position position="381"/>
    </location>
    <ligand>
        <name>S-adenosyl-L-methionine</name>
        <dbReference type="ChEBI" id="CHEBI:59789"/>
    </ligand>
</feature>
<evidence type="ECO:0000250" key="1"/>
<evidence type="ECO:0000255" key="2">
    <source>
        <dbReference type="PROSITE-ProRule" id="PRU00208"/>
    </source>
</evidence>
<evidence type="ECO:0000255" key="3">
    <source>
        <dbReference type="PROSITE-ProRule" id="PRU01024"/>
    </source>
</evidence>
<gene>
    <name type="ordered locus">SpyM3_1299</name>
</gene>
<organism>
    <name type="scientific">Streptococcus pyogenes serotype M3 (strain ATCC BAA-595 / MGAS315)</name>
    <dbReference type="NCBI Taxonomy" id="198466"/>
    <lineage>
        <taxon>Bacteria</taxon>
        <taxon>Bacillati</taxon>
        <taxon>Bacillota</taxon>
        <taxon>Bacilli</taxon>
        <taxon>Lactobacillales</taxon>
        <taxon>Streptococcaceae</taxon>
        <taxon>Streptococcus</taxon>
    </lineage>
</organism>
<accession>P0DG16</accession>
<accession>Q79XZ4</accession>
<accession>Q8K6K7</accession>